<gene>
    <name type="primary">rpl2-A</name>
</gene>
<gene>
    <name type="primary">rpl2-B</name>
</gene>
<sequence length="273" mass="29866">MAINLYKTSIPSTRKGAVDSQVKSNPRNNLIYGQHRCGKGRNARGIITAGHRGGGHKRLYRKIDFRRNDKDISGRIVTIEYDPNRNAYICLIHYGDGEKRYILHPRGAIIGDTIVSGTEVPISMGNALPLTDMPLGTAIHNIEITLEKGGQLARAAGAVSKLIAKEGKSATLRLPSGEVRLISKNCSATVGQVGNVEVNQKSLGRAGSKCWLGKRPVVRGVVMNPVDHPHGGGEGRAPIGRKKPATPWGYPALGRRSRKRNKYSDRFILRRRK</sequence>
<comment type="subunit">
    <text evidence="1">Part of the 50S ribosomal subunit.</text>
</comment>
<comment type="subcellular location">
    <subcellularLocation>
        <location>Plastid</location>
        <location>Chloroplast</location>
    </subcellularLocation>
</comment>
<comment type="similarity">
    <text evidence="4">Belongs to the universal ribosomal protein uL2 family.</text>
</comment>
<protein>
    <recommendedName>
        <fullName evidence="2">Large ribosomal subunit protein uL2cz/uL2cy</fullName>
    </recommendedName>
    <alternativeName>
        <fullName evidence="4">50S ribosomal protein L2, chloroplastic</fullName>
    </alternativeName>
</protein>
<keyword id="KW-0150">Chloroplast</keyword>
<keyword id="KW-0934">Plastid</keyword>
<keyword id="KW-0687">Ribonucleoprotein</keyword>
<keyword id="KW-0689">Ribosomal protein</keyword>
<reference key="1">
    <citation type="journal article" date="2006" name="BMC Evol. Biol.">
        <title>Complete plastid genome sequences of Drimys, Liriodendron, and Piper: implications for the phylogenetic relationships of magnoliids.</title>
        <authorList>
            <person name="Cai Z."/>
            <person name="Penaflor C."/>
            <person name="Kuehl J.V."/>
            <person name="Leebens-Mack J."/>
            <person name="Carlson J.E."/>
            <person name="dePamphilis C.W."/>
            <person name="Boore J.L."/>
            <person name="Jansen R.K."/>
        </authorList>
    </citation>
    <scope>NUCLEOTIDE SEQUENCE [LARGE SCALE GENOMIC DNA]</scope>
</reference>
<proteinExistence type="inferred from homology"/>
<name>RK2_PIPCE</name>
<accession>Q06GJ5</accession>
<geneLocation type="chloroplast"/>
<evidence type="ECO:0000250" key="1"/>
<evidence type="ECO:0000255" key="2">
    <source>
        <dbReference type="HAMAP-Rule" id="MF_01320"/>
    </source>
</evidence>
<evidence type="ECO:0000256" key="3">
    <source>
        <dbReference type="SAM" id="MobiDB-lite"/>
    </source>
</evidence>
<evidence type="ECO:0000305" key="4"/>
<feature type="chain" id="PRO_0000277097" description="Large ribosomal subunit protein uL2cz/uL2cy">
    <location>
        <begin position="1"/>
        <end position="273"/>
    </location>
</feature>
<feature type="region of interest" description="Disordered" evidence="3">
    <location>
        <begin position="224"/>
        <end position="273"/>
    </location>
</feature>
<feature type="compositionally biased region" description="Basic and acidic residues" evidence="3">
    <location>
        <begin position="262"/>
        <end position="273"/>
    </location>
</feature>
<organism>
    <name type="scientific">Piper cenocladum</name>
    <name type="common">Ant piper</name>
    <dbReference type="NCBI Taxonomy" id="398741"/>
    <lineage>
        <taxon>Eukaryota</taxon>
        <taxon>Viridiplantae</taxon>
        <taxon>Streptophyta</taxon>
        <taxon>Embryophyta</taxon>
        <taxon>Tracheophyta</taxon>
        <taxon>Spermatophyta</taxon>
        <taxon>Magnoliopsida</taxon>
        <taxon>Magnoliidae</taxon>
        <taxon>Piperales</taxon>
        <taxon>Piperaceae</taxon>
        <taxon>Piper</taxon>
    </lineage>
</organism>
<dbReference type="EMBL" id="DQ887677">
    <property type="protein sequence ID" value="ABI14537.1"/>
    <property type="molecule type" value="Genomic_DNA"/>
</dbReference>
<dbReference type="EMBL" id="DQ887677">
    <property type="protein sequence ID" value="ABI14513.1"/>
    <property type="molecule type" value="Genomic_DNA"/>
</dbReference>
<dbReference type="SMR" id="Q06GJ5"/>
<dbReference type="GO" id="GO:0009507">
    <property type="term" value="C:chloroplast"/>
    <property type="evidence" value="ECO:0007669"/>
    <property type="project" value="UniProtKB-SubCell"/>
</dbReference>
<dbReference type="GO" id="GO:0005762">
    <property type="term" value="C:mitochondrial large ribosomal subunit"/>
    <property type="evidence" value="ECO:0007669"/>
    <property type="project" value="TreeGrafter"/>
</dbReference>
<dbReference type="GO" id="GO:0019843">
    <property type="term" value="F:rRNA binding"/>
    <property type="evidence" value="ECO:0007669"/>
    <property type="project" value="UniProtKB-UniRule"/>
</dbReference>
<dbReference type="GO" id="GO:0003735">
    <property type="term" value="F:structural constituent of ribosome"/>
    <property type="evidence" value="ECO:0007669"/>
    <property type="project" value="InterPro"/>
</dbReference>
<dbReference type="GO" id="GO:0016740">
    <property type="term" value="F:transferase activity"/>
    <property type="evidence" value="ECO:0007669"/>
    <property type="project" value="InterPro"/>
</dbReference>
<dbReference type="GO" id="GO:0032543">
    <property type="term" value="P:mitochondrial translation"/>
    <property type="evidence" value="ECO:0007669"/>
    <property type="project" value="TreeGrafter"/>
</dbReference>
<dbReference type="FunFam" id="4.10.950.10:FF:000001">
    <property type="entry name" value="50S ribosomal protein L2"/>
    <property type="match status" value="1"/>
</dbReference>
<dbReference type="FunFam" id="2.30.30.30:FF:000008">
    <property type="entry name" value="50S ribosomal protein L2, chloroplastic"/>
    <property type="match status" value="1"/>
</dbReference>
<dbReference type="FunFam" id="2.40.50.140:FF:000029">
    <property type="entry name" value="50S ribosomal protein L2, chloroplastic"/>
    <property type="match status" value="1"/>
</dbReference>
<dbReference type="Gene3D" id="2.30.30.30">
    <property type="match status" value="1"/>
</dbReference>
<dbReference type="Gene3D" id="2.40.50.140">
    <property type="entry name" value="Nucleic acid-binding proteins"/>
    <property type="match status" value="1"/>
</dbReference>
<dbReference type="Gene3D" id="4.10.950.10">
    <property type="entry name" value="Ribosomal protein L2, domain 3"/>
    <property type="match status" value="1"/>
</dbReference>
<dbReference type="HAMAP" id="MF_01320_B">
    <property type="entry name" value="Ribosomal_uL2_B"/>
    <property type="match status" value="1"/>
</dbReference>
<dbReference type="InterPro" id="IPR012340">
    <property type="entry name" value="NA-bd_OB-fold"/>
</dbReference>
<dbReference type="InterPro" id="IPR014722">
    <property type="entry name" value="Rib_uL2_dom2"/>
</dbReference>
<dbReference type="InterPro" id="IPR002171">
    <property type="entry name" value="Ribosomal_uL2"/>
</dbReference>
<dbReference type="InterPro" id="IPR005880">
    <property type="entry name" value="Ribosomal_uL2_bac/org-type"/>
</dbReference>
<dbReference type="InterPro" id="IPR022669">
    <property type="entry name" value="Ribosomal_uL2_C"/>
</dbReference>
<dbReference type="InterPro" id="IPR022671">
    <property type="entry name" value="Ribosomal_uL2_CS"/>
</dbReference>
<dbReference type="InterPro" id="IPR014726">
    <property type="entry name" value="Ribosomal_uL2_dom3"/>
</dbReference>
<dbReference type="InterPro" id="IPR022666">
    <property type="entry name" value="Ribosomal_uL2_RNA-bd_dom"/>
</dbReference>
<dbReference type="InterPro" id="IPR008991">
    <property type="entry name" value="Translation_prot_SH3-like_sf"/>
</dbReference>
<dbReference type="NCBIfam" id="TIGR01171">
    <property type="entry name" value="rplB_bact"/>
    <property type="match status" value="1"/>
</dbReference>
<dbReference type="PANTHER" id="PTHR13691:SF5">
    <property type="entry name" value="LARGE RIBOSOMAL SUBUNIT PROTEIN UL2M"/>
    <property type="match status" value="1"/>
</dbReference>
<dbReference type="PANTHER" id="PTHR13691">
    <property type="entry name" value="RIBOSOMAL PROTEIN L2"/>
    <property type="match status" value="1"/>
</dbReference>
<dbReference type="Pfam" id="PF00181">
    <property type="entry name" value="Ribosomal_L2"/>
    <property type="match status" value="1"/>
</dbReference>
<dbReference type="Pfam" id="PF03947">
    <property type="entry name" value="Ribosomal_L2_C"/>
    <property type="match status" value="1"/>
</dbReference>
<dbReference type="PIRSF" id="PIRSF002158">
    <property type="entry name" value="Ribosomal_L2"/>
    <property type="match status" value="1"/>
</dbReference>
<dbReference type="SMART" id="SM01383">
    <property type="entry name" value="Ribosomal_L2"/>
    <property type="match status" value="1"/>
</dbReference>
<dbReference type="SMART" id="SM01382">
    <property type="entry name" value="Ribosomal_L2_C"/>
    <property type="match status" value="1"/>
</dbReference>
<dbReference type="SUPFAM" id="SSF50249">
    <property type="entry name" value="Nucleic acid-binding proteins"/>
    <property type="match status" value="1"/>
</dbReference>
<dbReference type="SUPFAM" id="SSF50104">
    <property type="entry name" value="Translation proteins SH3-like domain"/>
    <property type="match status" value="1"/>
</dbReference>
<dbReference type="PROSITE" id="PS00467">
    <property type="entry name" value="RIBOSOMAL_L2"/>
    <property type="match status" value="1"/>
</dbReference>